<comment type="function">
    <text evidence="1">May act as a negative regulator of salt tolerance.</text>
</comment>
<comment type="subcellular location">
    <subcellularLocation>
        <location evidence="1">Cytoplasm</location>
    </subcellularLocation>
</comment>
<comment type="similarity">
    <text evidence="4">Belongs to the NST1 family.</text>
</comment>
<protein>
    <recommendedName>
        <fullName>Stress response protein NST1</fullName>
    </recommendedName>
</protein>
<reference key="1">
    <citation type="journal article" date="2004" name="Nature">
        <title>Genome evolution in yeasts.</title>
        <authorList>
            <person name="Dujon B."/>
            <person name="Sherman D."/>
            <person name="Fischer G."/>
            <person name="Durrens P."/>
            <person name="Casaregola S."/>
            <person name="Lafontaine I."/>
            <person name="de Montigny J."/>
            <person name="Marck C."/>
            <person name="Neuveglise C."/>
            <person name="Talla E."/>
            <person name="Goffard N."/>
            <person name="Frangeul L."/>
            <person name="Aigle M."/>
            <person name="Anthouard V."/>
            <person name="Babour A."/>
            <person name="Barbe V."/>
            <person name="Barnay S."/>
            <person name="Blanchin S."/>
            <person name="Beckerich J.-M."/>
            <person name="Beyne E."/>
            <person name="Bleykasten C."/>
            <person name="Boisrame A."/>
            <person name="Boyer J."/>
            <person name="Cattolico L."/>
            <person name="Confanioleri F."/>
            <person name="de Daruvar A."/>
            <person name="Despons L."/>
            <person name="Fabre E."/>
            <person name="Fairhead C."/>
            <person name="Ferry-Dumazet H."/>
            <person name="Groppi A."/>
            <person name="Hantraye F."/>
            <person name="Hennequin C."/>
            <person name="Jauniaux N."/>
            <person name="Joyet P."/>
            <person name="Kachouri R."/>
            <person name="Kerrest A."/>
            <person name="Koszul R."/>
            <person name="Lemaire M."/>
            <person name="Lesur I."/>
            <person name="Ma L."/>
            <person name="Muller H."/>
            <person name="Nicaud J.-M."/>
            <person name="Nikolski M."/>
            <person name="Oztas S."/>
            <person name="Ozier-Kalogeropoulos O."/>
            <person name="Pellenz S."/>
            <person name="Potier S."/>
            <person name="Richard G.-F."/>
            <person name="Straub M.-L."/>
            <person name="Suleau A."/>
            <person name="Swennen D."/>
            <person name="Tekaia F."/>
            <person name="Wesolowski-Louvel M."/>
            <person name="Westhof E."/>
            <person name="Wirth B."/>
            <person name="Zeniou-Meyer M."/>
            <person name="Zivanovic Y."/>
            <person name="Bolotin-Fukuhara M."/>
            <person name="Thierry A."/>
            <person name="Bouchier C."/>
            <person name="Caudron B."/>
            <person name="Scarpelli C."/>
            <person name="Gaillardin C."/>
            <person name="Weissenbach J."/>
            <person name="Wincker P."/>
            <person name="Souciet J.-L."/>
        </authorList>
    </citation>
    <scope>NUCLEOTIDE SEQUENCE [LARGE SCALE GENOMIC DNA]</scope>
    <source>
        <strain>ATCC 2001 / BCRC 20586 / JCM 3761 / NBRC 0622 / NRRL Y-65 / CBS 138</strain>
    </source>
</reference>
<evidence type="ECO:0000250" key="1"/>
<evidence type="ECO:0000255" key="2"/>
<evidence type="ECO:0000256" key="3">
    <source>
        <dbReference type="SAM" id="MobiDB-lite"/>
    </source>
</evidence>
<evidence type="ECO:0000305" key="4"/>
<gene>
    <name type="primary">NST1</name>
    <name type="ordered locus">CAGL0K09834g</name>
</gene>
<accession>Q6FM98</accession>
<dbReference type="EMBL" id="CR380957">
    <property type="protein sequence ID" value="CAG61609.1"/>
    <property type="molecule type" value="Genomic_DNA"/>
</dbReference>
<dbReference type="RefSeq" id="XP_448646.1">
    <property type="nucleotide sequence ID" value="XM_448646.1"/>
</dbReference>
<dbReference type="SMR" id="Q6FM98"/>
<dbReference type="FunCoup" id="Q6FM98">
    <property type="interactions" value="29"/>
</dbReference>
<dbReference type="STRING" id="284593.Q6FM98"/>
<dbReference type="EnsemblFungi" id="CAGL0K09834g-T">
    <property type="protein sequence ID" value="CAGL0K09834g-T-p1"/>
    <property type="gene ID" value="CAGL0K09834g"/>
</dbReference>
<dbReference type="KEGG" id="cgr:2890202"/>
<dbReference type="CGD" id="CAL0134577">
    <property type="gene designation" value="CAGL0K09834g"/>
</dbReference>
<dbReference type="VEuPathDB" id="FungiDB:CAGL0K09834g"/>
<dbReference type="eggNOG" id="ENOG502QSSK">
    <property type="taxonomic scope" value="Eukaryota"/>
</dbReference>
<dbReference type="HOGENOM" id="CLU_267374_0_0_1"/>
<dbReference type="InParanoid" id="Q6FM98"/>
<dbReference type="OMA" id="TLDSHWE"/>
<dbReference type="Proteomes" id="UP000002428">
    <property type="component" value="Chromosome K"/>
</dbReference>
<dbReference type="GO" id="GO:0015630">
    <property type="term" value="C:microtubule cytoskeleton"/>
    <property type="evidence" value="ECO:0007669"/>
    <property type="project" value="TreeGrafter"/>
</dbReference>
<dbReference type="GO" id="GO:0000932">
    <property type="term" value="C:P-body"/>
    <property type="evidence" value="ECO:0007669"/>
    <property type="project" value="EnsemblFungi"/>
</dbReference>
<dbReference type="GO" id="GO:0000226">
    <property type="term" value="P:microtubule cytoskeleton organization"/>
    <property type="evidence" value="ECO:0007669"/>
    <property type="project" value="TreeGrafter"/>
</dbReference>
<dbReference type="GO" id="GO:0017148">
    <property type="term" value="P:negative regulation of translation"/>
    <property type="evidence" value="ECO:0007669"/>
    <property type="project" value="EnsemblFungi"/>
</dbReference>
<dbReference type="GO" id="GO:0009651">
    <property type="term" value="P:response to salt stress"/>
    <property type="evidence" value="ECO:0007669"/>
    <property type="project" value="EnsemblFungi"/>
</dbReference>
<dbReference type="InterPro" id="IPR051483">
    <property type="entry name" value="MAP7_domain-containing"/>
</dbReference>
<dbReference type="InterPro" id="IPR025279">
    <property type="entry name" value="NST1"/>
</dbReference>
<dbReference type="PANTHER" id="PTHR15073">
    <property type="entry name" value="MICROTUBULE-ASSOCIATED PROTEIN"/>
    <property type="match status" value="1"/>
</dbReference>
<dbReference type="PANTHER" id="PTHR15073:SF1">
    <property type="entry name" value="RETICULOCYTE-BINDING PROTEIN HOMOLOG 2A"/>
    <property type="match status" value="1"/>
</dbReference>
<dbReference type="Pfam" id="PF13945">
    <property type="entry name" value="NST1"/>
    <property type="match status" value="1"/>
</dbReference>
<organism>
    <name type="scientific">Candida glabrata (strain ATCC 2001 / BCRC 20586 / JCM 3761 / NBRC 0622 / NRRL Y-65 / CBS 138)</name>
    <name type="common">Yeast</name>
    <name type="synonym">Nakaseomyces glabratus</name>
    <dbReference type="NCBI Taxonomy" id="284593"/>
    <lineage>
        <taxon>Eukaryota</taxon>
        <taxon>Fungi</taxon>
        <taxon>Dikarya</taxon>
        <taxon>Ascomycota</taxon>
        <taxon>Saccharomycotina</taxon>
        <taxon>Saccharomycetes</taxon>
        <taxon>Saccharomycetales</taxon>
        <taxon>Saccharomycetaceae</taxon>
        <taxon>Nakaseomyces</taxon>
    </lineage>
</organism>
<proteinExistence type="inferred from homology"/>
<feature type="chain" id="PRO_0000324445" description="Stress response protein NST1">
    <location>
        <begin position="1"/>
        <end position="1320"/>
    </location>
</feature>
<feature type="region of interest" description="Disordered" evidence="3">
    <location>
        <begin position="1"/>
        <end position="85"/>
    </location>
</feature>
<feature type="region of interest" description="Disordered" evidence="3">
    <location>
        <begin position="541"/>
        <end position="598"/>
    </location>
</feature>
<feature type="region of interest" description="Disordered" evidence="3">
    <location>
        <begin position="656"/>
        <end position="766"/>
    </location>
</feature>
<feature type="region of interest" description="Disordered" evidence="3">
    <location>
        <begin position="1048"/>
        <end position="1073"/>
    </location>
</feature>
<feature type="coiled-coil region" evidence="2">
    <location>
        <begin position="637"/>
        <end position="807"/>
    </location>
</feature>
<feature type="compositionally biased region" description="Basic residues" evidence="3">
    <location>
        <begin position="1"/>
        <end position="22"/>
    </location>
</feature>
<feature type="compositionally biased region" description="Acidic residues" evidence="3">
    <location>
        <begin position="33"/>
        <end position="42"/>
    </location>
</feature>
<feature type="compositionally biased region" description="Polar residues" evidence="3">
    <location>
        <begin position="541"/>
        <end position="555"/>
    </location>
</feature>
<feature type="compositionally biased region" description="Basic and acidic residues" evidence="3">
    <location>
        <begin position="579"/>
        <end position="590"/>
    </location>
</feature>
<name>NST1_CANGA</name>
<keyword id="KW-0175">Coiled coil</keyword>
<keyword id="KW-0963">Cytoplasm</keyword>
<keyword id="KW-1185">Reference proteome</keyword>
<keyword id="KW-0346">Stress response</keyword>
<sequence length="1320" mass="150796">MPSGSKSKKKKSKSKGGVKKHAVEKVAPPIEAEIMDERDESDYPTSRVIKRGPNGDVIVESLPDKSTSGKKSKKKGKLSDLEVSESAKQMGITLDSHWESLSPDEKKNILRIEKEEVLEIIRNYQNDHNCSCSVCGRRHMAMNQEMERMYNLLYELEEQRDPDMNPVKFHLGIIKELQISKNKQILDQTEGPNDNTTHEEVVKNFLSSDIADKLKEEVHQFKQKQLSKQECNRPSSLANDNIEEEIPCAQIPQANEEAMTKDIQKTLEQLSVVEPVSKINVIQEDDLGEIKEENKEYLKFTESFISSQPKIAQKFIQKLDENPCMKAITDEVMQNSSYEFLDALKNLWAPNLLKIVESEDDDNLVNLNETLDPIEFTTMLHHGNPLSQQDYYDLQGAISRKVVNAFNFENRKLEHLSPLEVELFGRFMSSDQDNIFHNMLLEAYNERFKEEPFKMMSNIPQIIKAVATLTNLDGRMMDDVDENHFTSEEERYDDDITDYSDSEYEDYDSEYDDIDNGDIISDVDEPFSTLKSDQLRVNYDTNSGNINHSDNYESNSRLREVTDENEENLQYDTPQEKYNYSDHGKDHGTIADEDEDSIDEGYESSIDDMERLEEGRRLIQIAITKLLQGRIMESYHEKEADSNRLKLLKELEEEQMKKKEKEVKKIKKKEKEKEKRRLQQLAKEEEKRKKEEEERSAREEQERREMERREAQRKKVEEAKRKKDEERRRKLEEQRKREEQQEKQRKAKEEQKRKREEEKKKKEELERQLREEELMKKKEEEERLLREKERAEILKKETELAMSMKENHSSQSLSIQNQFFSNPQNSNIGMQNYFNNDLDNTNAGLGNGGPTNLGVRKNSHVLGLTQVYSDKANNSPGKNDDNNEINNEILNIINAATTAKSGSRTSMDMQALLQPPFTDNVNDQIRSSNLINDQASGMNSNGLSTNFHSPYGSNVFSGENQLSNNLQNDILTGLNADTSSTNLASWTSLPALNNLNANQHILSNNQTPLHQQKGTSPISNTMMDTKRDYLGDELSKLTTMLTTNSLNESPAFSSSNLQSSLWNDQNSSGKTPLGSNTTQIPLSQPAFLGTEPPVHRSSIWGDSSASMFNFSQRLSVPTNSNSVSSQTVPNQNIGMGSSFTNPSIWSTGSDFNVPSRDMNSGVAFTNSFSNTSPRNQFALNSGSMLQNQSQRQNIMDNIRLLSNSPQNNGYIPIDLLYQSINKQSTSDFPSFLNNVIDLERSHNYDLVKDQTGVINGVRVGSENRPVSTAFSNFHQNMDPTMKGPEHLSNSIPGTARNFEGNSYLAKEATMNIIPSSSLDR</sequence>